<organism>
    <name type="scientific">Schizosaccharomyces pombe (strain 972 / ATCC 24843)</name>
    <name type="common">Fission yeast</name>
    <dbReference type="NCBI Taxonomy" id="284812"/>
    <lineage>
        <taxon>Eukaryota</taxon>
        <taxon>Fungi</taxon>
        <taxon>Dikarya</taxon>
        <taxon>Ascomycota</taxon>
        <taxon>Taphrinomycotina</taxon>
        <taxon>Schizosaccharomycetes</taxon>
        <taxon>Schizosaccharomycetales</taxon>
        <taxon>Schizosaccharomycetaceae</taxon>
        <taxon>Schizosaccharomyces</taxon>
    </lineage>
</organism>
<feature type="chain" id="PRO_0000046735" description="DNA primase small subunit">
    <location>
        <begin position="1"/>
        <end position="454"/>
    </location>
</feature>
<feature type="region of interest" description="Disordered" evidence="5">
    <location>
        <begin position="385"/>
        <end position="420"/>
    </location>
</feature>
<feature type="short sequence motif" description="Zinc knuckle motif" evidence="3">
    <location>
        <begin position="143"/>
        <end position="153"/>
    </location>
</feature>
<feature type="compositionally biased region" description="Polar residues" evidence="5">
    <location>
        <begin position="389"/>
        <end position="404"/>
    </location>
</feature>
<feature type="compositionally biased region" description="Polar residues" evidence="5">
    <location>
        <begin position="411"/>
        <end position="420"/>
    </location>
</feature>
<feature type="active site" evidence="4">
    <location>
        <position position="66"/>
    </location>
</feature>
<feature type="active site" evidence="4">
    <location>
        <position position="131"/>
    </location>
</feature>
<feature type="active site" evidence="4">
    <location>
        <position position="133"/>
    </location>
</feature>
<feature type="binding site" evidence="3">
    <location>
        <begin position="131"/>
        <end position="133"/>
    </location>
    <ligand>
        <name>a ribonucleoside 5'-triphosphate</name>
        <dbReference type="ChEBI" id="CHEBI:61557"/>
    </ligand>
</feature>
<feature type="binding site" evidence="3">
    <location>
        <position position="131"/>
    </location>
    <ligand>
        <name>Mg(2+)</name>
        <dbReference type="ChEBI" id="CHEBI:18420"/>
        <label>1</label>
    </ligand>
</feature>
<feature type="binding site" evidence="3">
    <location>
        <position position="131"/>
    </location>
    <ligand>
        <name>Mg(2+)</name>
        <dbReference type="ChEBI" id="CHEBI:18420"/>
        <label>2</label>
    </ligand>
</feature>
<feature type="binding site" evidence="3">
    <location>
        <position position="131"/>
    </location>
    <ligand>
        <name>Mn(2+)</name>
        <dbReference type="ChEBI" id="CHEBI:29035"/>
        <label>1</label>
    </ligand>
</feature>
<feature type="binding site" evidence="3">
    <location>
        <position position="131"/>
    </location>
    <ligand>
        <name>Mn(2+)</name>
        <dbReference type="ChEBI" id="CHEBI:29035"/>
        <label>2</label>
    </ligand>
</feature>
<feature type="binding site" evidence="3">
    <location>
        <position position="133"/>
    </location>
    <ligand>
        <name>Mg(2+)</name>
        <dbReference type="ChEBI" id="CHEBI:18420"/>
        <label>1</label>
    </ligand>
</feature>
<feature type="binding site" evidence="3">
    <location>
        <position position="133"/>
    </location>
    <ligand>
        <name>Mg(2+)</name>
        <dbReference type="ChEBI" id="CHEBI:18420"/>
        <label>2</label>
    </ligand>
</feature>
<feature type="binding site" evidence="3">
    <location>
        <position position="133"/>
    </location>
    <ligand>
        <name>Mn(2+)</name>
        <dbReference type="ChEBI" id="CHEBI:29035"/>
        <label>1</label>
    </ligand>
</feature>
<feature type="binding site" evidence="3">
    <location>
        <position position="133"/>
    </location>
    <ligand>
        <name>Mn(2+)</name>
        <dbReference type="ChEBI" id="CHEBI:29035"/>
        <label>2</label>
    </ligand>
</feature>
<feature type="binding site" evidence="3">
    <location>
        <position position="143"/>
    </location>
    <ligand>
        <name>Zn(2+)</name>
        <dbReference type="ChEBI" id="CHEBI:29105"/>
    </ligand>
</feature>
<feature type="binding site" evidence="3">
    <location>
        <position position="144"/>
    </location>
    <ligand>
        <name>Zn(2+)</name>
        <dbReference type="ChEBI" id="CHEBI:29105"/>
    </ligand>
</feature>
<feature type="binding site" evidence="3">
    <location>
        <position position="150"/>
    </location>
    <ligand>
        <name>Zn(2+)</name>
        <dbReference type="ChEBI" id="CHEBI:29105"/>
    </ligand>
</feature>
<feature type="binding site" evidence="3">
    <location>
        <position position="153"/>
    </location>
    <ligand>
        <name>Zn(2+)</name>
        <dbReference type="ChEBI" id="CHEBI:29105"/>
    </ligand>
</feature>
<feature type="binding site" evidence="3">
    <location>
        <begin position="182"/>
        <end position="188"/>
    </location>
    <ligand>
        <name>a ribonucleoside 5'-triphosphate</name>
        <dbReference type="ChEBI" id="CHEBI:61557"/>
    </ligand>
</feature>
<feature type="binding site" evidence="3">
    <location>
        <position position="333"/>
    </location>
    <ligand>
        <name>Mg(2+)</name>
        <dbReference type="ChEBI" id="CHEBI:18420"/>
        <label>2</label>
    </ligand>
</feature>
<feature type="binding site" evidence="3">
    <location>
        <position position="333"/>
    </location>
    <ligand>
        <name>Mn(2+)</name>
        <dbReference type="ChEBI" id="CHEBI:29035"/>
        <label>2</label>
    </ligand>
</feature>
<feature type="binding site" evidence="3">
    <location>
        <begin position="342"/>
        <end position="345"/>
    </location>
    <ligand>
        <name>a ribonucleoside 5'-triphosphate</name>
        <dbReference type="ChEBI" id="CHEBI:61557"/>
    </ligand>
</feature>
<sequence length="454" mass="52009">MTVQIDELDDKDLDEIIANGTLDGAKQGAVDSETMIQYYRHLFPWKYLFQWLNHGPVVTNDFAHREFAFTLPNDAYIRYLSFSNWEELKKEALNLCPSRFEVGPVYSANPRDRKTIRKSTFHPLKKELVFDIDMTDYDDVRTCCSKTNICEKCWPFITIAVQVLDICFHEDFGFKHILWVYSGRRGIHAWICDEIACSLDDRSRRMIASYLQVVVGNPQGGVRLINNLKRPLHPHLTRSLNILKSAFVKIVLEDQDPWASKEGAENLLKLLPDKDLASALRKKWEVDPERSSKNKWSDIDTVLASGSIASISPSVIAIAKQDIVLTYLYPRLDVEVSRHLNHLLKSPFCVHPGTSRVCVPIDIERMDSFNPLKVPTVNDLLQELDKNSQNDNGHGPTMETNTTENQKDNARGQSNKGHGFSTSLNPYTLYFKSFSSQLFKETVGNKRKHENLEF</sequence>
<protein>
    <recommendedName>
        <fullName evidence="3">DNA primase small subunit</fullName>
        <ecNumber evidence="3">2.7.7.102</ecNumber>
    </recommendedName>
    <alternativeName>
        <fullName evidence="10">DNA primase 1</fullName>
    </alternativeName>
</protein>
<proteinExistence type="evidence at protein level"/>
<reference key="1">
    <citation type="journal article" date="2002" name="Nature">
        <title>The genome sequence of Schizosaccharomyces pombe.</title>
        <authorList>
            <person name="Wood V."/>
            <person name="Gwilliam R."/>
            <person name="Rajandream M.A."/>
            <person name="Lyne M.H."/>
            <person name="Lyne R."/>
            <person name="Stewart A."/>
            <person name="Sgouros J.G."/>
            <person name="Peat N."/>
            <person name="Hayles J."/>
            <person name="Baker S.G."/>
            <person name="Basham D."/>
            <person name="Bowman S."/>
            <person name="Brooks K."/>
            <person name="Brown D."/>
            <person name="Brown S."/>
            <person name="Chillingworth T."/>
            <person name="Churcher C.M."/>
            <person name="Collins M."/>
            <person name="Connor R."/>
            <person name="Cronin A."/>
            <person name="Davis P."/>
            <person name="Feltwell T."/>
            <person name="Fraser A."/>
            <person name="Gentles S."/>
            <person name="Goble A."/>
            <person name="Hamlin N."/>
            <person name="Harris D.E."/>
            <person name="Hidalgo J."/>
            <person name="Hodgson G."/>
            <person name="Holroyd S."/>
            <person name="Hornsby T."/>
            <person name="Howarth S."/>
            <person name="Huckle E.J."/>
            <person name="Hunt S."/>
            <person name="Jagels K."/>
            <person name="James K.D."/>
            <person name="Jones L."/>
            <person name="Jones M."/>
            <person name="Leather S."/>
            <person name="McDonald S."/>
            <person name="McLean J."/>
            <person name="Mooney P."/>
            <person name="Moule S."/>
            <person name="Mungall K.L."/>
            <person name="Murphy L.D."/>
            <person name="Niblett D."/>
            <person name="Odell C."/>
            <person name="Oliver K."/>
            <person name="O'Neil S."/>
            <person name="Pearson D."/>
            <person name="Quail M.A."/>
            <person name="Rabbinowitsch E."/>
            <person name="Rutherford K.M."/>
            <person name="Rutter S."/>
            <person name="Saunders D."/>
            <person name="Seeger K."/>
            <person name="Sharp S."/>
            <person name="Skelton J."/>
            <person name="Simmonds M.N."/>
            <person name="Squares R."/>
            <person name="Squares S."/>
            <person name="Stevens K."/>
            <person name="Taylor K."/>
            <person name="Taylor R.G."/>
            <person name="Tivey A."/>
            <person name="Walsh S.V."/>
            <person name="Warren T."/>
            <person name="Whitehead S."/>
            <person name="Woodward J.R."/>
            <person name="Volckaert G."/>
            <person name="Aert R."/>
            <person name="Robben J."/>
            <person name="Grymonprez B."/>
            <person name="Weltjens I."/>
            <person name="Vanstreels E."/>
            <person name="Rieger M."/>
            <person name="Schaefer M."/>
            <person name="Mueller-Auer S."/>
            <person name="Gabel C."/>
            <person name="Fuchs M."/>
            <person name="Duesterhoeft A."/>
            <person name="Fritzc C."/>
            <person name="Holzer E."/>
            <person name="Moestl D."/>
            <person name="Hilbert H."/>
            <person name="Borzym K."/>
            <person name="Langer I."/>
            <person name="Beck A."/>
            <person name="Lehrach H."/>
            <person name="Reinhardt R."/>
            <person name="Pohl T.M."/>
            <person name="Eger P."/>
            <person name="Zimmermann W."/>
            <person name="Wedler H."/>
            <person name="Wambutt R."/>
            <person name="Purnelle B."/>
            <person name="Goffeau A."/>
            <person name="Cadieu E."/>
            <person name="Dreano S."/>
            <person name="Gloux S."/>
            <person name="Lelaure V."/>
            <person name="Mottier S."/>
            <person name="Galibert F."/>
            <person name="Aves S.J."/>
            <person name="Xiang Z."/>
            <person name="Hunt C."/>
            <person name="Moore K."/>
            <person name="Hurst S.M."/>
            <person name="Lucas M."/>
            <person name="Rochet M."/>
            <person name="Gaillardin C."/>
            <person name="Tallada V.A."/>
            <person name="Garzon A."/>
            <person name="Thode G."/>
            <person name="Daga R.R."/>
            <person name="Cruzado L."/>
            <person name="Jimenez J."/>
            <person name="Sanchez M."/>
            <person name="del Rey F."/>
            <person name="Benito J."/>
            <person name="Dominguez A."/>
            <person name="Revuelta J.L."/>
            <person name="Moreno S."/>
            <person name="Armstrong J."/>
            <person name="Forsburg S.L."/>
            <person name="Cerutti L."/>
            <person name="Lowe T."/>
            <person name="McCombie W.R."/>
            <person name="Paulsen I."/>
            <person name="Potashkin J."/>
            <person name="Shpakovski G.V."/>
            <person name="Ussery D."/>
            <person name="Barrell B.G."/>
            <person name="Nurse P."/>
        </authorList>
    </citation>
    <scope>NUCLEOTIDE SEQUENCE [LARGE SCALE GENOMIC DNA]</scope>
    <source>
        <strain>972 / ATCC 24843</strain>
    </source>
</reference>
<reference key="2">
    <citation type="journal article" date="2000" name="Mol. Cell. Biol.">
        <title>Analysis of fission yeast primase defines the checkpoint responses to aberrant S phase initiation.</title>
        <authorList>
            <person name="Tan S."/>
            <person name="Wang T.S."/>
        </authorList>
    </citation>
    <scope>INTERACTION WITH POL1 AND SPP2</scope>
</reference>
<reference key="3">
    <citation type="journal article" date="2001" name="Mol. Biol. Cell">
        <title>Role of fission yeast primase catalytic subunit in the replication checkpoint.</title>
        <authorList>
            <person name="Griffiths D.J."/>
            <person name="Liu V.F."/>
            <person name="Nurse P."/>
            <person name="Wang T.S."/>
        </authorList>
    </citation>
    <scope>INTERACTION WITH POL1 AND SPP2</scope>
    <scope>SUBCELLULAR LOCATION</scope>
    <scope>DEVELOPMENTAL STAGE</scope>
</reference>
<reference key="4">
    <citation type="journal article" date="2004" name="Mol. Cell. Biol.">
        <title>The B-subunit of DNA polymerase alpha-primase associates with the origin recognition complex for initiation of DNA replication.</title>
        <authorList>
            <person name="Uchiyama M."/>
            <person name="Wang T.S."/>
        </authorList>
    </citation>
    <scope>IDENTIFICATION IN THE DNA POLYMERASE ALPHA COMPLEX</scope>
</reference>
<comment type="function">
    <text evidence="3">Catalytic subunit of the DNA primase complex and component of the DNA polymerase alpha complex (also known as the alpha DNA polymerase-primase complex - primosome/replisome) which play an essential role in the initiation of DNA synthesis (By similarity). During the S phase of the cell cycle, the DNA polymerase alpha complex (composed of a catalytic subunit pol1, an accessory subunit spb70/pol12 and two primase subunits, the catalytic subunit spp1/pri1 and the regulatory subunit spp2/pri2) is recruited to DNA at the replicative forks (By similarity). The primase subunit of the polymerase alpha complex initiates DNA synthesis by oligomerising short RNA primers on both leading and lagging strands (By similarity).</text>
</comment>
<comment type="catalytic activity">
    <reaction evidence="3">
        <text>ssDNA + n NTP = ssDNA/pppN(pN)n-1 hybrid + (n-1) diphosphate.</text>
        <dbReference type="EC" id="2.7.7.102"/>
    </reaction>
</comment>
<comment type="cofactor">
    <cofactor evidence="3">
        <name>Mg(2+)</name>
        <dbReference type="ChEBI" id="CHEBI:18420"/>
    </cofactor>
    <cofactor evidence="3">
        <name>Mn(2+)</name>
        <dbReference type="ChEBI" id="CHEBI:29035"/>
    </cofactor>
</comment>
<comment type="subunit">
    <text evidence="2 6 7 8">Heterodimer of a catalytic subunit spp1/pri1 and a regulatory subunit spp2/pri2, also known as the DNA primase complex (By similarity). Component of the alpha DNA polymerase complex (also known as the alpha DNA polymerase-primase complex) consisting of four subunits: the catalytic subunit pol1, the accessory subunit spb70/pol12, and the primase complex subunits spp1/pri1 and spp2/pri2 respectively (PubMed:11027257, PubMed:11160827, PubMed:15314153).</text>
</comment>
<comment type="interaction">
    <interactant intactId="EBI-849063">
        <id>O14215</id>
    </interactant>
    <interactant intactId="EBI-849075">
        <id>O74761</id>
        <label>spp2</label>
    </interactant>
    <organismsDiffer>false</organismsDiffer>
    <experiments>2</experiments>
</comment>
<comment type="subcellular location">
    <subcellularLocation>
        <location evidence="7">Nucleus</location>
    </subcellularLocation>
</comment>
<comment type="developmental stage">
    <text evidence="7">Constitutively expressed throughout the cell cycle (at protein level).</text>
</comment>
<comment type="miscellaneous">
    <text evidence="1">The bound zinc ion is not a cofactor. It is bound to a zinc knuckle motif that may be involved in sequence recognition and the binding of ssDNA (By similarity).</text>
</comment>
<comment type="similarity">
    <text evidence="11">Belongs to the eukaryotic-type primase small subunit family.</text>
</comment>
<keyword id="KW-0235">DNA replication</keyword>
<keyword id="KW-0240">DNA-directed RNA polymerase</keyword>
<keyword id="KW-0460">Magnesium</keyword>
<keyword id="KW-0464">Manganese</keyword>
<keyword id="KW-0479">Metal-binding</keyword>
<keyword id="KW-0548">Nucleotidyltransferase</keyword>
<keyword id="KW-0539">Nucleus</keyword>
<keyword id="KW-0639">Primosome</keyword>
<keyword id="KW-1185">Reference proteome</keyword>
<keyword id="KW-0804">Transcription</keyword>
<keyword id="KW-0808">Transferase</keyword>
<keyword id="KW-0862">Zinc</keyword>
<evidence type="ECO:0000250" key="1"/>
<evidence type="ECO:0000250" key="2">
    <source>
        <dbReference type="UniProtKB" id="P20664"/>
    </source>
</evidence>
<evidence type="ECO:0000250" key="3">
    <source>
        <dbReference type="UniProtKB" id="P49642"/>
    </source>
</evidence>
<evidence type="ECO:0000255" key="4"/>
<evidence type="ECO:0000256" key="5">
    <source>
        <dbReference type="SAM" id="MobiDB-lite"/>
    </source>
</evidence>
<evidence type="ECO:0000269" key="6">
    <source>
    </source>
</evidence>
<evidence type="ECO:0000269" key="7">
    <source>
    </source>
</evidence>
<evidence type="ECO:0000269" key="8">
    <source>
    </source>
</evidence>
<evidence type="ECO:0000303" key="9">
    <source>
    </source>
</evidence>
<evidence type="ECO:0000303" key="10">
    <source>
    </source>
</evidence>
<evidence type="ECO:0000305" key="11"/>
<evidence type="ECO:0000312" key="12">
    <source>
        <dbReference type="PomBase" id="SPAC6B12.10c"/>
    </source>
</evidence>
<accession>O14215</accession>
<gene>
    <name evidence="9 12" type="primary">spp1</name>
    <name evidence="12" type="synonym">pri1</name>
    <name evidence="12" type="ORF">SPAC6B12.10c</name>
</gene>
<dbReference type="EC" id="2.7.7.102" evidence="3"/>
<dbReference type="EMBL" id="CU329670">
    <property type="protein sequence ID" value="CAB11078.1"/>
    <property type="molecule type" value="Genomic_DNA"/>
</dbReference>
<dbReference type="PIR" id="T39017">
    <property type="entry name" value="T39017"/>
</dbReference>
<dbReference type="RefSeq" id="NP_593765.1">
    <property type="nucleotide sequence ID" value="NM_001019195.2"/>
</dbReference>
<dbReference type="SMR" id="O14215"/>
<dbReference type="BioGRID" id="279746">
    <property type="interactions" value="7"/>
</dbReference>
<dbReference type="ComplexPortal" id="CPX-2092">
    <property type="entry name" value="DNA polymerase alpha:primase complex"/>
</dbReference>
<dbReference type="FunCoup" id="O14215">
    <property type="interactions" value="102"/>
</dbReference>
<dbReference type="IntAct" id="O14215">
    <property type="interactions" value="4"/>
</dbReference>
<dbReference type="STRING" id="284812.O14215"/>
<dbReference type="PaxDb" id="4896-SPAC6B12.10c.1"/>
<dbReference type="EnsemblFungi" id="SPAC6B12.10c.1">
    <property type="protein sequence ID" value="SPAC6B12.10c.1:pep"/>
    <property type="gene ID" value="SPAC6B12.10c"/>
</dbReference>
<dbReference type="GeneID" id="2543323"/>
<dbReference type="KEGG" id="spo:2543323"/>
<dbReference type="PomBase" id="SPAC6B12.10c">
    <property type="gene designation" value="spp1"/>
</dbReference>
<dbReference type="VEuPathDB" id="FungiDB:SPAC6B12.10c"/>
<dbReference type="eggNOG" id="KOG2851">
    <property type="taxonomic scope" value="Eukaryota"/>
</dbReference>
<dbReference type="HOGENOM" id="CLU_028288_1_0_1"/>
<dbReference type="InParanoid" id="O14215"/>
<dbReference type="OMA" id="NVTRGFN"/>
<dbReference type="PhylomeDB" id="O14215"/>
<dbReference type="Reactome" id="R-SPO-113501">
    <property type="pathway name" value="Inhibition of replication initiation of damaged DNA by RB1/E2F1"/>
</dbReference>
<dbReference type="Reactome" id="R-SPO-68952">
    <property type="pathway name" value="DNA replication initiation"/>
</dbReference>
<dbReference type="Reactome" id="R-SPO-68962">
    <property type="pathway name" value="Activation of the pre-replicative complex"/>
</dbReference>
<dbReference type="Reactome" id="R-SPO-69091">
    <property type="pathway name" value="Polymerase switching"/>
</dbReference>
<dbReference type="Reactome" id="R-SPO-69166">
    <property type="pathway name" value="Removal of the Flap Intermediate"/>
</dbReference>
<dbReference type="Reactome" id="R-SPO-69183">
    <property type="pathway name" value="Processive synthesis on the lagging strand"/>
</dbReference>
<dbReference type="PRO" id="PR:O14215"/>
<dbReference type="Proteomes" id="UP000002485">
    <property type="component" value="Chromosome I"/>
</dbReference>
<dbReference type="GO" id="GO:0005658">
    <property type="term" value="C:alpha DNA polymerase:primase complex"/>
    <property type="evidence" value="ECO:0000353"/>
    <property type="project" value="ComplexPortal"/>
</dbReference>
<dbReference type="GO" id="GO:0000785">
    <property type="term" value="C:chromatin"/>
    <property type="evidence" value="ECO:0000314"/>
    <property type="project" value="PomBase"/>
</dbReference>
<dbReference type="GO" id="GO:0005737">
    <property type="term" value="C:cytoplasm"/>
    <property type="evidence" value="ECO:0000314"/>
    <property type="project" value="PomBase"/>
</dbReference>
<dbReference type="GO" id="GO:0005634">
    <property type="term" value="C:nucleus"/>
    <property type="evidence" value="ECO:0000314"/>
    <property type="project" value="PomBase"/>
</dbReference>
<dbReference type="GO" id="GO:0003899">
    <property type="term" value="F:DNA-directed RNA polymerase activity"/>
    <property type="evidence" value="ECO:0007669"/>
    <property type="project" value="InterPro"/>
</dbReference>
<dbReference type="GO" id="GO:0046872">
    <property type="term" value="F:metal ion binding"/>
    <property type="evidence" value="ECO:0007669"/>
    <property type="project" value="UniProtKB-KW"/>
</dbReference>
<dbReference type="GO" id="GO:0006270">
    <property type="term" value="P:DNA replication initiation"/>
    <property type="evidence" value="ECO:0000314"/>
    <property type="project" value="ComplexPortal"/>
</dbReference>
<dbReference type="GO" id="GO:0006269">
    <property type="term" value="P:DNA replication, synthesis of primer"/>
    <property type="evidence" value="ECO:0000318"/>
    <property type="project" value="GO_Central"/>
</dbReference>
<dbReference type="CDD" id="cd04860">
    <property type="entry name" value="AE_Prim_S"/>
    <property type="match status" value="1"/>
</dbReference>
<dbReference type="FunFam" id="3.90.920.10:FF:000002">
    <property type="entry name" value="DNA primase"/>
    <property type="match status" value="1"/>
</dbReference>
<dbReference type="Gene3D" id="3.90.920.10">
    <property type="entry name" value="DNA primase, PRIM domain"/>
    <property type="match status" value="1"/>
</dbReference>
<dbReference type="InterPro" id="IPR002755">
    <property type="entry name" value="DNA_primase_S"/>
</dbReference>
<dbReference type="InterPro" id="IPR014052">
    <property type="entry name" value="DNA_primase_ssu_euk/arc"/>
</dbReference>
<dbReference type="NCBIfam" id="TIGR00335">
    <property type="entry name" value="primase_sml"/>
    <property type="match status" value="1"/>
</dbReference>
<dbReference type="PANTHER" id="PTHR10536">
    <property type="entry name" value="DNA PRIMASE SMALL SUBUNIT"/>
    <property type="match status" value="1"/>
</dbReference>
<dbReference type="Pfam" id="PF01896">
    <property type="entry name" value="DNA_primase_S"/>
    <property type="match status" value="1"/>
</dbReference>
<dbReference type="SUPFAM" id="SSF56747">
    <property type="entry name" value="Prim-pol domain"/>
    <property type="match status" value="1"/>
</dbReference>
<name>PRI1_SCHPO</name>